<evidence type="ECO:0000250" key="1"/>
<evidence type="ECO:0000250" key="2">
    <source>
        <dbReference type="UniProtKB" id="P53129"/>
    </source>
</evidence>
<evidence type="ECO:0000305" key="3"/>
<organism>
    <name type="scientific">Kluyveromyces lactis (strain ATCC 8585 / CBS 2359 / DSM 70799 / NBRC 1267 / NRRL Y-1140 / WM37)</name>
    <name type="common">Yeast</name>
    <name type="synonym">Candida sphaerica</name>
    <dbReference type="NCBI Taxonomy" id="284590"/>
    <lineage>
        <taxon>Eukaryota</taxon>
        <taxon>Fungi</taxon>
        <taxon>Dikarya</taxon>
        <taxon>Ascomycota</taxon>
        <taxon>Saccharomycotina</taxon>
        <taxon>Saccharomycetes</taxon>
        <taxon>Saccharomycetales</taxon>
        <taxon>Saccharomycetaceae</taxon>
        <taxon>Kluyveromyces</taxon>
    </lineage>
</organism>
<keyword id="KW-0072">Autophagy</keyword>
<keyword id="KW-0967">Endosome</keyword>
<keyword id="KW-0472">Membrane</keyword>
<keyword id="KW-0653">Protein transport</keyword>
<keyword id="KW-1185">Reference proteome</keyword>
<keyword id="KW-0813">Transport</keyword>
<keyword id="KW-0926">Vacuole</keyword>
<dbReference type="EMBL" id="CR382126">
    <property type="protein sequence ID" value="CAG98232.1"/>
    <property type="molecule type" value="Genomic_DNA"/>
</dbReference>
<dbReference type="RefSeq" id="XP_455524.1">
    <property type="nucleotide sequence ID" value="XM_455524.1"/>
</dbReference>
<dbReference type="SMR" id="Q6CKL5"/>
<dbReference type="FunCoup" id="Q6CKL5">
    <property type="interactions" value="579"/>
</dbReference>
<dbReference type="STRING" id="284590.Q6CKL5"/>
<dbReference type="PaxDb" id="284590-Q6CKL5"/>
<dbReference type="KEGG" id="kla:KLLA0_F09768g"/>
<dbReference type="eggNOG" id="KOG0997">
    <property type="taxonomic scope" value="Eukaryota"/>
</dbReference>
<dbReference type="HOGENOM" id="CLU_014574_0_0_1"/>
<dbReference type="InParanoid" id="Q6CKL5"/>
<dbReference type="OMA" id="TKTCAIT"/>
<dbReference type="Proteomes" id="UP000000598">
    <property type="component" value="Chromosome F"/>
</dbReference>
<dbReference type="GO" id="GO:0000329">
    <property type="term" value="C:fungal-type vacuole membrane"/>
    <property type="evidence" value="ECO:0007669"/>
    <property type="project" value="TreeGrafter"/>
</dbReference>
<dbReference type="GO" id="GO:0035658">
    <property type="term" value="C:Mon1-Ccz1 complex"/>
    <property type="evidence" value="ECO:0007669"/>
    <property type="project" value="TreeGrafter"/>
</dbReference>
<dbReference type="GO" id="GO:0032585">
    <property type="term" value="C:multivesicular body membrane"/>
    <property type="evidence" value="ECO:0007669"/>
    <property type="project" value="UniProtKB-SubCell"/>
</dbReference>
<dbReference type="GO" id="GO:0006914">
    <property type="term" value="P:autophagy"/>
    <property type="evidence" value="ECO:0007669"/>
    <property type="project" value="UniProtKB-KW"/>
</dbReference>
<dbReference type="GO" id="GO:0006623">
    <property type="term" value="P:protein targeting to vacuole"/>
    <property type="evidence" value="ECO:0007669"/>
    <property type="project" value="InterPro"/>
</dbReference>
<dbReference type="GO" id="GO:0016192">
    <property type="term" value="P:vesicle-mediated transport"/>
    <property type="evidence" value="ECO:0007669"/>
    <property type="project" value="InterPro"/>
</dbReference>
<dbReference type="InterPro" id="IPR043972">
    <property type="entry name" value="FUZ/MON1/HPS1_longin_1"/>
</dbReference>
<dbReference type="InterPro" id="IPR043971">
    <property type="entry name" value="FUZ/MON1/HPS1_longin_2"/>
</dbReference>
<dbReference type="InterPro" id="IPR043970">
    <property type="entry name" value="FUZ/MON1/HPS1_longin_3"/>
</dbReference>
<dbReference type="InterPro" id="IPR004353">
    <property type="entry name" value="Mon1"/>
</dbReference>
<dbReference type="PANTHER" id="PTHR13027">
    <property type="entry name" value="SAND PROTEIN-RELATED"/>
    <property type="match status" value="1"/>
</dbReference>
<dbReference type="PANTHER" id="PTHR13027:SF7">
    <property type="entry name" value="VACUOLAR FUSION PROTEIN MON1 HOMOLOG"/>
    <property type="match status" value="1"/>
</dbReference>
<dbReference type="Pfam" id="PF19036">
    <property type="entry name" value="Fuz_longin_1"/>
    <property type="match status" value="1"/>
</dbReference>
<dbReference type="Pfam" id="PF19037">
    <property type="entry name" value="Fuz_longin_2"/>
    <property type="match status" value="1"/>
</dbReference>
<dbReference type="Pfam" id="PF19038">
    <property type="entry name" value="Fuz_longin_3"/>
    <property type="match status" value="1"/>
</dbReference>
<dbReference type="PRINTS" id="PR01546">
    <property type="entry name" value="YEAST73DUF"/>
</dbReference>
<accession>Q6CKL5</accession>
<sequence>MRRSPSFQISTKNSAKPTTSIDLTNHLSARGGLFYQDIDTGTTASIKAKNDPNLLAATYDHSISADTDLNIDLQSLITSELNSLYPLTLNQETSNKSANTTKFIDERGGKDKHFFVFTSAGKLVFSQWENENHAMGLTGIIHTVMNYFNINDNTAMRQFTMYGKDGIMTRFVFLDKNHIKLMVQCNNNYESTAQLQQQLDLVYSYIISSVSQRNLNKLMLKRSNFDLQHYLTDLDQQLLKSLCESLATQPKLTWFANSLECLPMSPKKRNAINSILSTTYLDFNISNHNGQILYTLVTSLDMRLISILRPSNHTLHTMDLQILFEVVRAQLTDLLLDKVLWFPICFQKFNDNGFLYALIKVLPNNTIMMVISSQKNAFDILNEFVRRIEDKMIDDNTCNNLELQLLDWHKKFPYINHFIYKMKRTVQIYTPSQPTNEMLQFYYHLKNLCEDDKGTNLNKSSVAMLKWKNDATPGLLSGVYWATEKFELYILLNDINLSNQSILKSAKLLIQHIREIESYLFISRGVTF</sequence>
<comment type="function">
    <text evidence="2">In complex with CCZ1, is required for multiple vacuole delivery pathways including the cytoplasm to vacuole transport (Cvt), autophagy, pexophagy and endocytosis. The MON1-CCZ1 complex acts at the fusion of vesicles with the vacuole, through its regulation of the SNARE complex during the coordinated priming and docking stages of fusion, and particularly at the stage of tethering/docking.</text>
</comment>
<comment type="subcellular location">
    <subcellularLocation>
        <location evidence="1">Endosome</location>
        <location evidence="1">Multivesicular body membrane</location>
        <topology evidence="1">Peripheral membrane protein</topology>
    </subcellularLocation>
    <subcellularLocation>
        <location evidence="1">Prevacuolar compartment membrane</location>
        <topology evidence="1">Peripheral membrane protein</topology>
    </subcellularLocation>
    <subcellularLocation>
        <location evidence="1">Vacuole membrane</location>
        <topology evidence="1">Peripheral membrane protein</topology>
    </subcellularLocation>
</comment>
<comment type="similarity">
    <text evidence="3">Belongs to the MON1/SAND family.</text>
</comment>
<name>MON1_KLULA</name>
<proteinExistence type="inferred from homology"/>
<reference key="1">
    <citation type="journal article" date="2004" name="Nature">
        <title>Genome evolution in yeasts.</title>
        <authorList>
            <person name="Dujon B."/>
            <person name="Sherman D."/>
            <person name="Fischer G."/>
            <person name="Durrens P."/>
            <person name="Casaregola S."/>
            <person name="Lafontaine I."/>
            <person name="de Montigny J."/>
            <person name="Marck C."/>
            <person name="Neuveglise C."/>
            <person name="Talla E."/>
            <person name="Goffard N."/>
            <person name="Frangeul L."/>
            <person name="Aigle M."/>
            <person name="Anthouard V."/>
            <person name="Babour A."/>
            <person name="Barbe V."/>
            <person name="Barnay S."/>
            <person name="Blanchin S."/>
            <person name="Beckerich J.-M."/>
            <person name="Beyne E."/>
            <person name="Bleykasten C."/>
            <person name="Boisrame A."/>
            <person name="Boyer J."/>
            <person name="Cattolico L."/>
            <person name="Confanioleri F."/>
            <person name="de Daruvar A."/>
            <person name="Despons L."/>
            <person name="Fabre E."/>
            <person name="Fairhead C."/>
            <person name="Ferry-Dumazet H."/>
            <person name="Groppi A."/>
            <person name="Hantraye F."/>
            <person name="Hennequin C."/>
            <person name="Jauniaux N."/>
            <person name="Joyet P."/>
            <person name="Kachouri R."/>
            <person name="Kerrest A."/>
            <person name="Koszul R."/>
            <person name="Lemaire M."/>
            <person name="Lesur I."/>
            <person name="Ma L."/>
            <person name="Muller H."/>
            <person name="Nicaud J.-M."/>
            <person name="Nikolski M."/>
            <person name="Oztas S."/>
            <person name="Ozier-Kalogeropoulos O."/>
            <person name="Pellenz S."/>
            <person name="Potier S."/>
            <person name="Richard G.-F."/>
            <person name="Straub M.-L."/>
            <person name="Suleau A."/>
            <person name="Swennen D."/>
            <person name="Tekaia F."/>
            <person name="Wesolowski-Louvel M."/>
            <person name="Westhof E."/>
            <person name="Wirth B."/>
            <person name="Zeniou-Meyer M."/>
            <person name="Zivanovic Y."/>
            <person name="Bolotin-Fukuhara M."/>
            <person name="Thierry A."/>
            <person name="Bouchier C."/>
            <person name="Caudron B."/>
            <person name="Scarpelli C."/>
            <person name="Gaillardin C."/>
            <person name="Weissenbach J."/>
            <person name="Wincker P."/>
            <person name="Souciet J.-L."/>
        </authorList>
    </citation>
    <scope>NUCLEOTIDE SEQUENCE [LARGE SCALE GENOMIC DNA]</scope>
    <source>
        <strain>ATCC 8585 / CBS 2359 / DSM 70799 / NBRC 1267 / NRRL Y-1140 / WM37</strain>
    </source>
</reference>
<protein>
    <recommendedName>
        <fullName>Vacuolar fusion protein MON1</fullName>
    </recommendedName>
</protein>
<feature type="chain" id="PRO_0000278863" description="Vacuolar fusion protein MON1">
    <location>
        <begin position="1"/>
        <end position="528"/>
    </location>
</feature>
<gene>
    <name type="primary">MON1</name>
    <name type="ordered locus">KLLA0F09768g</name>
</gene>